<keyword id="KW-0028">Amino-acid biosynthesis</keyword>
<keyword id="KW-0067">ATP-binding</keyword>
<keyword id="KW-0963">Cytoplasm</keyword>
<keyword id="KW-0328">Glycosyltransferase</keyword>
<keyword id="KW-0368">Histidine biosynthesis</keyword>
<keyword id="KW-0460">Magnesium</keyword>
<keyword id="KW-0479">Metal-binding</keyword>
<keyword id="KW-0547">Nucleotide-binding</keyword>
<keyword id="KW-1185">Reference proteome</keyword>
<keyword id="KW-0808">Transferase</keyword>
<organism>
    <name type="scientific">Shewanella oneidensis (strain ATCC 700550 / JCM 31522 / CIP 106686 / LMG 19005 / NCIMB 14063 / MR-1)</name>
    <dbReference type="NCBI Taxonomy" id="211586"/>
    <lineage>
        <taxon>Bacteria</taxon>
        <taxon>Pseudomonadati</taxon>
        <taxon>Pseudomonadota</taxon>
        <taxon>Gammaproteobacteria</taxon>
        <taxon>Alteromonadales</taxon>
        <taxon>Shewanellaceae</taxon>
        <taxon>Shewanella</taxon>
    </lineage>
</organism>
<name>HIS1_SHEON</name>
<comment type="function">
    <text evidence="1">Catalyzes the condensation of ATP and 5-phosphoribose 1-diphosphate to form N'-(5'-phosphoribosyl)-ATP (PR-ATP). Has a crucial role in the pathway because the rate of histidine biosynthesis seems to be controlled primarily by regulation of HisG enzymatic activity.</text>
</comment>
<comment type="catalytic activity">
    <reaction evidence="1">
        <text>1-(5-phospho-beta-D-ribosyl)-ATP + diphosphate = 5-phospho-alpha-D-ribose 1-diphosphate + ATP</text>
        <dbReference type="Rhea" id="RHEA:18473"/>
        <dbReference type="ChEBI" id="CHEBI:30616"/>
        <dbReference type="ChEBI" id="CHEBI:33019"/>
        <dbReference type="ChEBI" id="CHEBI:58017"/>
        <dbReference type="ChEBI" id="CHEBI:73183"/>
        <dbReference type="EC" id="2.4.2.17"/>
    </reaction>
</comment>
<comment type="cofactor">
    <cofactor evidence="1">
        <name>Mg(2+)</name>
        <dbReference type="ChEBI" id="CHEBI:18420"/>
    </cofactor>
</comment>
<comment type="activity regulation">
    <text evidence="1">Feedback inhibited by histidine.</text>
</comment>
<comment type="pathway">
    <text evidence="1">Amino-acid biosynthesis; L-histidine biosynthesis; L-histidine from 5-phospho-alpha-D-ribose 1-diphosphate: step 1/9.</text>
</comment>
<comment type="subcellular location">
    <subcellularLocation>
        <location evidence="1">Cytoplasm</location>
    </subcellularLocation>
</comment>
<comment type="similarity">
    <text evidence="1">Belongs to the ATP phosphoribosyltransferase family. Long subfamily.</text>
</comment>
<comment type="sequence caution" evidence="2">
    <conflict type="erroneous initiation">
        <sequence resource="EMBL-CDS" id="AAN55121"/>
    </conflict>
</comment>
<protein>
    <recommendedName>
        <fullName evidence="1">ATP phosphoribosyltransferase</fullName>
        <shortName evidence="1">ATP-PRT</shortName>
        <shortName evidence="1">ATP-PRTase</shortName>
        <ecNumber evidence="1">2.4.2.17</ecNumber>
    </recommendedName>
</protein>
<reference key="1">
    <citation type="journal article" date="2002" name="Nat. Biotechnol.">
        <title>Genome sequence of the dissimilatory metal ion-reducing bacterium Shewanella oneidensis.</title>
        <authorList>
            <person name="Heidelberg J.F."/>
            <person name="Paulsen I.T."/>
            <person name="Nelson K.E."/>
            <person name="Gaidos E.J."/>
            <person name="Nelson W.C."/>
            <person name="Read T.D."/>
            <person name="Eisen J.A."/>
            <person name="Seshadri R."/>
            <person name="Ward N.L."/>
            <person name="Methe B.A."/>
            <person name="Clayton R.A."/>
            <person name="Meyer T."/>
            <person name="Tsapin A."/>
            <person name="Scott J."/>
            <person name="Beanan M.J."/>
            <person name="Brinkac L.M."/>
            <person name="Daugherty S.C."/>
            <person name="DeBoy R.T."/>
            <person name="Dodson R.J."/>
            <person name="Durkin A.S."/>
            <person name="Haft D.H."/>
            <person name="Kolonay J.F."/>
            <person name="Madupu R."/>
            <person name="Peterson J.D."/>
            <person name="Umayam L.A."/>
            <person name="White O."/>
            <person name="Wolf A.M."/>
            <person name="Vamathevan J.J."/>
            <person name="Weidman J.F."/>
            <person name="Impraim M."/>
            <person name="Lee K."/>
            <person name="Berry K.J."/>
            <person name="Lee C."/>
            <person name="Mueller J."/>
            <person name="Khouri H.M."/>
            <person name="Gill J."/>
            <person name="Utterback T.R."/>
            <person name="McDonald L.A."/>
            <person name="Feldblyum T.V."/>
            <person name="Smith H.O."/>
            <person name="Venter J.C."/>
            <person name="Nealson K.H."/>
            <person name="Fraser C.M."/>
        </authorList>
    </citation>
    <scope>NUCLEOTIDE SEQUENCE [LARGE SCALE GENOMIC DNA]</scope>
    <source>
        <strain>ATCC 700550 / JCM 31522 / CIP 106686 / LMG 19005 / NCIMB 14063 / MR-1</strain>
    </source>
</reference>
<evidence type="ECO:0000255" key="1">
    <source>
        <dbReference type="HAMAP-Rule" id="MF_00079"/>
    </source>
</evidence>
<evidence type="ECO:0000305" key="2"/>
<dbReference type="EC" id="2.4.2.17" evidence="1"/>
<dbReference type="EMBL" id="AE014299">
    <property type="protein sequence ID" value="AAN55121.1"/>
    <property type="status" value="ALT_INIT"/>
    <property type="molecule type" value="Genomic_DNA"/>
</dbReference>
<dbReference type="RefSeq" id="NP_717677.1">
    <property type="nucleotide sequence ID" value="NC_004347.2"/>
</dbReference>
<dbReference type="RefSeq" id="WP_164925682.1">
    <property type="nucleotide sequence ID" value="NC_004347.2"/>
</dbReference>
<dbReference type="SMR" id="Q8EFB0"/>
<dbReference type="STRING" id="211586.SO_2074"/>
<dbReference type="PaxDb" id="211586-SO_2074"/>
<dbReference type="KEGG" id="son:SO_2074"/>
<dbReference type="PATRIC" id="fig|211586.12.peg.1992"/>
<dbReference type="eggNOG" id="COG0040">
    <property type="taxonomic scope" value="Bacteria"/>
</dbReference>
<dbReference type="HOGENOM" id="CLU_038115_1_0_6"/>
<dbReference type="OrthoDB" id="9801867at2"/>
<dbReference type="PhylomeDB" id="Q8EFB0"/>
<dbReference type="UniPathway" id="UPA00031">
    <property type="reaction ID" value="UER00006"/>
</dbReference>
<dbReference type="Proteomes" id="UP000008186">
    <property type="component" value="Chromosome"/>
</dbReference>
<dbReference type="GO" id="GO:0005737">
    <property type="term" value="C:cytoplasm"/>
    <property type="evidence" value="ECO:0007669"/>
    <property type="project" value="UniProtKB-SubCell"/>
</dbReference>
<dbReference type="GO" id="GO:0005524">
    <property type="term" value="F:ATP binding"/>
    <property type="evidence" value="ECO:0007669"/>
    <property type="project" value="UniProtKB-KW"/>
</dbReference>
<dbReference type="GO" id="GO:0003879">
    <property type="term" value="F:ATP phosphoribosyltransferase activity"/>
    <property type="evidence" value="ECO:0000318"/>
    <property type="project" value="GO_Central"/>
</dbReference>
<dbReference type="GO" id="GO:0000287">
    <property type="term" value="F:magnesium ion binding"/>
    <property type="evidence" value="ECO:0007669"/>
    <property type="project" value="UniProtKB-UniRule"/>
</dbReference>
<dbReference type="GO" id="GO:0000105">
    <property type="term" value="P:L-histidine biosynthetic process"/>
    <property type="evidence" value="ECO:0000318"/>
    <property type="project" value="GO_Central"/>
</dbReference>
<dbReference type="CDD" id="cd13592">
    <property type="entry name" value="PBP2_HisGL2"/>
    <property type="match status" value="1"/>
</dbReference>
<dbReference type="FunFam" id="3.30.70.120:FF:000002">
    <property type="entry name" value="ATP phosphoribosyltransferase"/>
    <property type="match status" value="1"/>
</dbReference>
<dbReference type="FunFam" id="3.40.190.10:FF:000008">
    <property type="entry name" value="ATP phosphoribosyltransferase"/>
    <property type="match status" value="1"/>
</dbReference>
<dbReference type="Gene3D" id="3.30.70.120">
    <property type="match status" value="1"/>
</dbReference>
<dbReference type="Gene3D" id="3.40.190.10">
    <property type="entry name" value="Periplasmic binding protein-like II"/>
    <property type="match status" value="2"/>
</dbReference>
<dbReference type="HAMAP" id="MF_00079">
    <property type="entry name" value="HisG_Long"/>
    <property type="match status" value="1"/>
</dbReference>
<dbReference type="InterPro" id="IPR020621">
    <property type="entry name" value="ATP-PRT_HisG_long"/>
</dbReference>
<dbReference type="InterPro" id="IPR013820">
    <property type="entry name" value="ATP_PRibTrfase_cat"/>
</dbReference>
<dbReference type="InterPro" id="IPR018198">
    <property type="entry name" value="ATP_PRibTrfase_CS"/>
</dbReference>
<dbReference type="InterPro" id="IPR001348">
    <property type="entry name" value="ATP_PRibTrfase_HisG"/>
</dbReference>
<dbReference type="InterPro" id="IPR013115">
    <property type="entry name" value="HisG_C"/>
</dbReference>
<dbReference type="InterPro" id="IPR011322">
    <property type="entry name" value="N-reg_PII-like_a/b"/>
</dbReference>
<dbReference type="InterPro" id="IPR015867">
    <property type="entry name" value="N-reg_PII/ATP_PRibTrfase_C"/>
</dbReference>
<dbReference type="NCBIfam" id="TIGR00070">
    <property type="entry name" value="hisG"/>
    <property type="match status" value="1"/>
</dbReference>
<dbReference type="NCBIfam" id="TIGR03455">
    <property type="entry name" value="HisG_C-term"/>
    <property type="match status" value="1"/>
</dbReference>
<dbReference type="PANTHER" id="PTHR21403:SF8">
    <property type="entry name" value="ATP PHOSPHORIBOSYLTRANSFERASE"/>
    <property type="match status" value="1"/>
</dbReference>
<dbReference type="PANTHER" id="PTHR21403">
    <property type="entry name" value="ATP PHOSPHORIBOSYLTRANSFERASE ATP-PRTASE"/>
    <property type="match status" value="1"/>
</dbReference>
<dbReference type="Pfam" id="PF01634">
    <property type="entry name" value="HisG"/>
    <property type="match status" value="1"/>
</dbReference>
<dbReference type="Pfam" id="PF08029">
    <property type="entry name" value="HisG_C"/>
    <property type="match status" value="1"/>
</dbReference>
<dbReference type="SUPFAM" id="SSF54913">
    <property type="entry name" value="GlnB-like"/>
    <property type="match status" value="1"/>
</dbReference>
<dbReference type="SUPFAM" id="SSF53850">
    <property type="entry name" value="Periplasmic binding protein-like II"/>
    <property type="match status" value="1"/>
</dbReference>
<dbReference type="PROSITE" id="PS01316">
    <property type="entry name" value="ATP_P_PHORIBOSYLTR"/>
    <property type="match status" value="1"/>
</dbReference>
<sequence>MTESNRLRIAIQKSGRLSTDSQQLLKSCGVKFSINEQRLIAHADNMPIDLLRVRDDDIPGLVMDGVVDLGIIGENVLEEEQIERQTLNKPAEYVKLRQLDFGACRLSLAVPTEFSYADASSLEGLRIATSYPNLLRRFMQQKSINYRDCMLKGSVEVAPRAGLADGICDLVSTGATLEANGLYETEVIYRSMACIIQSTQTQAPSKQALIDRILSRVNGVIRARESKYILLHAPTETLDQIVALLPGAENPTVLPLNDDTNRVAIHAVSTEDLFWDTMEQLTALGASSILVMPIEKMMG</sequence>
<accession>Q8EFB0</accession>
<feature type="chain" id="PRO_0000151865" description="ATP phosphoribosyltransferase">
    <location>
        <begin position="1"/>
        <end position="299"/>
    </location>
</feature>
<proteinExistence type="inferred from homology"/>
<gene>
    <name evidence="1" type="primary">hisG</name>
    <name type="ordered locus">SO_2074</name>
</gene>